<reference key="1">
    <citation type="journal article" date="2002" name="Genome Res.">
        <title>A complete sequence of the T. tengcongensis genome.</title>
        <authorList>
            <person name="Bao Q."/>
            <person name="Tian Y."/>
            <person name="Li W."/>
            <person name="Xu Z."/>
            <person name="Xuan Z."/>
            <person name="Hu S."/>
            <person name="Dong W."/>
            <person name="Yang J."/>
            <person name="Chen Y."/>
            <person name="Xue Y."/>
            <person name="Xu Y."/>
            <person name="Lai X."/>
            <person name="Huang L."/>
            <person name="Dong X."/>
            <person name="Ma Y."/>
            <person name="Ling L."/>
            <person name="Tan H."/>
            <person name="Chen R."/>
            <person name="Wang J."/>
            <person name="Yu J."/>
            <person name="Yang H."/>
        </authorList>
    </citation>
    <scope>NUCLEOTIDE SEQUENCE [LARGE SCALE GENOMIC DNA]</scope>
    <source>
        <strain>DSM 15242 / JCM 11007 / NBRC 100824 / MB4</strain>
    </source>
</reference>
<comment type="function">
    <text evidence="1">Bidirectionally degrades single-stranded DNA into large acid-insoluble oligonucleotides, which are then degraded further into small acid-soluble oligonucleotides.</text>
</comment>
<comment type="catalytic activity">
    <reaction evidence="1">
        <text>Exonucleolytic cleavage in either 5'- to 3'- or 3'- to 5'-direction to yield nucleoside 5'-phosphates.</text>
        <dbReference type="EC" id="3.1.11.6"/>
    </reaction>
</comment>
<comment type="subunit">
    <text evidence="1">Heterooligomer composed of large and small subunits.</text>
</comment>
<comment type="subcellular location">
    <subcellularLocation>
        <location evidence="1">Cytoplasm</location>
    </subcellularLocation>
</comment>
<comment type="similarity">
    <text evidence="1">Belongs to the XseA family.</text>
</comment>
<dbReference type="EC" id="3.1.11.6" evidence="1"/>
<dbReference type="EMBL" id="AE008691">
    <property type="protein sequence ID" value="AAM24518.1"/>
    <property type="molecule type" value="Genomic_DNA"/>
</dbReference>
<dbReference type="RefSeq" id="WP_011025608.1">
    <property type="nucleotide sequence ID" value="NC_003869.1"/>
</dbReference>
<dbReference type="SMR" id="Q8RAC9"/>
<dbReference type="STRING" id="273068.TTE1294"/>
<dbReference type="KEGG" id="tte:TTE1294"/>
<dbReference type="eggNOG" id="COG1570">
    <property type="taxonomic scope" value="Bacteria"/>
</dbReference>
<dbReference type="HOGENOM" id="CLU_023625_3_1_9"/>
<dbReference type="OrthoDB" id="9802795at2"/>
<dbReference type="Proteomes" id="UP000000555">
    <property type="component" value="Chromosome"/>
</dbReference>
<dbReference type="GO" id="GO:0005737">
    <property type="term" value="C:cytoplasm"/>
    <property type="evidence" value="ECO:0007669"/>
    <property type="project" value="UniProtKB-SubCell"/>
</dbReference>
<dbReference type="GO" id="GO:0009318">
    <property type="term" value="C:exodeoxyribonuclease VII complex"/>
    <property type="evidence" value="ECO:0007669"/>
    <property type="project" value="InterPro"/>
</dbReference>
<dbReference type="GO" id="GO:0008855">
    <property type="term" value="F:exodeoxyribonuclease VII activity"/>
    <property type="evidence" value="ECO:0007669"/>
    <property type="project" value="UniProtKB-UniRule"/>
</dbReference>
<dbReference type="GO" id="GO:0003676">
    <property type="term" value="F:nucleic acid binding"/>
    <property type="evidence" value="ECO:0007669"/>
    <property type="project" value="InterPro"/>
</dbReference>
<dbReference type="GO" id="GO:0006308">
    <property type="term" value="P:DNA catabolic process"/>
    <property type="evidence" value="ECO:0007669"/>
    <property type="project" value="UniProtKB-UniRule"/>
</dbReference>
<dbReference type="CDD" id="cd04489">
    <property type="entry name" value="ExoVII_LU_OBF"/>
    <property type="match status" value="1"/>
</dbReference>
<dbReference type="HAMAP" id="MF_00378">
    <property type="entry name" value="Exonuc_7_L"/>
    <property type="match status" value="1"/>
</dbReference>
<dbReference type="InterPro" id="IPR003753">
    <property type="entry name" value="Exonuc_VII_L"/>
</dbReference>
<dbReference type="InterPro" id="IPR020579">
    <property type="entry name" value="Exonuc_VII_lsu_C"/>
</dbReference>
<dbReference type="InterPro" id="IPR025824">
    <property type="entry name" value="OB-fold_nuc-bd_dom"/>
</dbReference>
<dbReference type="NCBIfam" id="TIGR00237">
    <property type="entry name" value="xseA"/>
    <property type="match status" value="1"/>
</dbReference>
<dbReference type="PANTHER" id="PTHR30008">
    <property type="entry name" value="EXODEOXYRIBONUCLEASE 7 LARGE SUBUNIT"/>
    <property type="match status" value="1"/>
</dbReference>
<dbReference type="PANTHER" id="PTHR30008:SF0">
    <property type="entry name" value="EXODEOXYRIBONUCLEASE 7 LARGE SUBUNIT"/>
    <property type="match status" value="1"/>
</dbReference>
<dbReference type="Pfam" id="PF02601">
    <property type="entry name" value="Exonuc_VII_L"/>
    <property type="match status" value="2"/>
</dbReference>
<dbReference type="Pfam" id="PF13742">
    <property type="entry name" value="tRNA_anti_2"/>
    <property type="match status" value="1"/>
</dbReference>
<protein>
    <recommendedName>
        <fullName evidence="1">Exodeoxyribonuclease 7 large subunit</fullName>
        <ecNumber evidence="1">3.1.11.6</ecNumber>
    </recommendedName>
    <alternativeName>
        <fullName evidence="1">Exodeoxyribonuclease VII large subunit</fullName>
        <shortName evidence="1">Exonuclease VII large subunit</shortName>
    </alternativeName>
</protein>
<organism>
    <name type="scientific">Caldanaerobacter subterraneus subsp. tengcongensis (strain DSM 15242 / JCM 11007 / NBRC 100824 / MB4)</name>
    <name type="common">Thermoanaerobacter tengcongensis</name>
    <dbReference type="NCBI Taxonomy" id="273068"/>
    <lineage>
        <taxon>Bacteria</taxon>
        <taxon>Bacillati</taxon>
        <taxon>Bacillota</taxon>
        <taxon>Clostridia</taxon>
        <taxon>Thermoanaerobacterales</taxon>
        <taxon>Thermoanaerobacteraceae</taxon>
        <taxon>Caldanaerobacter</taxon>
    </lineage>
</organism>
<keyword id="KW-0963">Cytoplasm</keyword>
<keyword id="KW-0269">Exonuclease</keyword>
<keyword id="KW-0378">Hydrolase</keyword>
<keyword id="KW-0540">Nuclease</keyword>
<keyword id="KW-1185">Reference proteome</keyword>
<gene>
    <name evidence="1" type="primary">xseA</name>
    <name type="ordered locus">TTE1294</name>
</gene>
<proteinExistence type="inferred from homology"/>
<name>EX7L_CALS4</name>
<feature type="chain" id="PRO_0000197898" description="Exodeoxyribonuclease 7 large subunit">
    <location>
        <begin position="1"/>
        <end position="404"/>
    </location>
</feature>
<evidence type="ECO:0000255" key="1">
    <source>
        <dbReference type="HAMAP-Rule" id="MF_00378"/>
    </source>
</evidence>
<accession>Q8RAC9</accession>
<sequence length="404" mass="45383">MQLKAFSVSEVTEYIKKVMDNDIILRNVRVRGEISNLKYHSTAVYFTLKDEGAALKCVMFNDYSRSLEFTLQDGMSVIATGRITVYEKGGLYQLYVQSVQMDGIGALYIAFNKLKEKLQKEGLFDLDKKKPIPKHPRKIAVVTSPTGAVIRDIITISRRRNPTVDIMVVPVLVQGSSAADEISNALRILNKRKDIDVIIVARGGGSLEEIWPFNEEKVARSIFASRIPVVSAVGHETDFTIADFVADLRAPTPSAAAELVVPDIKVYQRELFLLKTKIMNLMKAQVLHSKKEFEGLKRALYLNNPIKKNEVLKQRVKNLKKSLTKEMLSIFNQKKNELLVLNEKLDSLSPLKVLTRGYTIVLNKEGQVITSSRKVKTSEEVGILFSDGRATAVVKEVKEDGERI</sequence>